<gene>
    <name evidence="1" type="primary">rpsD</name>
    <name type="ordered locus">PA0088</name>
</gene>
<dbReference type="EMBL" id="AM422018">
    <property type="protein sequence ID" value="CAM11423.1"/>
    <property type="molecule type" value="Genomic_DNA"/>
</dbReference>
<dbReference type="SMR" id="B1V8Z1"/>
<dbReference type="STRING" id="59748.PA0088"/>
<dbReference type="KEGG" id="pal:PA0088"/>
<dbReference type="eggNOG" id="COG0522">
    <property type="taxonomic scope" value="Bacteria"/>
</dbReference>
<dbReference type="Proteomes" id="UP000008323">
    <property type="component" value="Chromosome"/>
</dbReference>
<dbReference type="GO" id="GO:0015935">
    <property type="term" value="C:small ribosomal subunit"/>
    <property type="evidence" value="ECO:0007669"/>
    <property type="project" value="InterPro"/>
</dbReference>
<dbReference type="GO" id="GO:0019843">
    <property type="term" value="F:rRNA binding"/>
    <property type="evidence" value="ECO:0007669"/>
    <property type="project" value="UniProtKB-UniRule"/>
</dbReference>
<dbReference type="GO" id="GO:0003735">
    <property type="term" value="F:structural constituent of ribosome"/>
    <property type="evidence" value="ECO:0007669"/>
    <property type="project" value="InterPro"/>
</dbReference>
<dbReference type="GO" id="GO:0042274">
    <property type="term" value="P:ribosomal small subunit biogenesis"/>
    <property type="evidence" value="ECO:0007669"/>
    <property type="project" value="TreeGrafter"/>
</dbReference>
<dbReference type="GO" id="GO:0006412">
    <property type="term" value="P:translation"/>
    <property type="evidence" value="ECO:0007669"/>
    <property type="project" value="UniProtKB-UniRule"/>
</dbReference>
<dbReference type="CDD" id="cd00165">
    <property type="entry name" value="S4"/>
    <property type="match status" value="1"/>
</dbReference>
<dbReference type="FunFam" id="1.10.1050.10:FF:000001">
    <property type="entry name" value="30S ribosomal protein S4"/>
    <property type="match status" value="1"/>
</dbReference>
<dbReference type="FunFam" id="3.10.290.10:FF:000001">
    <property type="entry name" value="30S ribosomal protein S4"/>
    <property type="match status" value="1"/>
</dbReference>
<dbReference type="Gene3D" id="1.10.1050.10">
    <property type="entry name" value="Ribosomal Protein S4 Delta 41, Chain A, domain 1"/>
    <property type="match status" value="1"/>
</dbReference>
<dbReference type="Gene3D" id="3.10.290.10">
    <property type="entry name" value="RNA-binding S4 domain"/>
    <property type="match status" value="1"/>
</dbReference>
<dbReference type="HAMAP" id="MF_01306_B">
    <property type="entry name" value="Ribosomal_uS4_B"/>
    <property type="match status" value="1"/>
</dbReference>
<dbReference type="InterPro" id="IPR022801">
    <property type="entry name" value="Ribosomal_uS4"/>
</dbReference>
<dbReference type="InterPro" id="IPR005709">
    <property type="entry name" value="Ribosomal_uS4_bac-type"/>
</dbReference>
<dbReference type="InterPro" id="IPR018079">
    <property type="entry name" value="Ribosomal_uS4_CS"/>
</dbReference>
<dbReference type="InterPro" id="IPR001912">
    <property type="entry name" value="Ribosomal_uS4_N"/>
</dbReference>
<dbReference type="InterPro" id="IPR002942">
    <property type="entry name" value="S4_RNA-bd"/>
</dbReference>
<dbReference type="InterPro" id="IPR036986">
    <property type="entry name" value="S4_RNA-bd_sf"/>
</dbReference>
<dbReference type="NCBIfam" id="NF003717">
    <property type="entry name" value="PRK05327.1"/>
    <property type="match status" value="1"/>
</dbReference>
<dbReference type="NCBIfam" id="TIGR01017">
    <property type="entry name" value="rpsD_bact"/>
    <property type="match status" value="1"/>
</dbReference>
<dbReference type="PANTHER" id="PTHR11831">
    <property type="entry name" value="30S 40S RIBOSOMAL PROTEIN"/>
    <property type="match status" value="1"/>
</dbReference>
<dbReference type="PANTHER" id="PTHR11831:SF4">
    <property type="entry name" value="SMALL RIBOSOMAL SUBUNIT PROTEIN US4M"/>
    <property type="match status" value="1"/>
</dbReference>
<dbReference type="Pfam" id="PF00163">
    <property type="entry name" value="Ribosomal_S4"/>
    <property type="match status" value="1"/>
</dbReference>
<dbReference type="Pfam" id="PF01479">
    <property type="entry name" value="S4"/>
    <property type="match status" value="1"/>
</dbReference>
<dbReference type="SMART" id="SM01390">
    <property type="entry name" value="Ribosomal_S4"/>
    <property type="match status" value="1"/>
</dbReference>
<dbReference type="SMART" id="SM00363">
    <property type="entry name" value="S4"/>
    <property type="match status" value="1"/>
</dbReference>
<dbReference type="SUPFAM" id="SSF55174">
    <property type="entry name" value="Alpha-L RNA-binding motif"/>
    <property type="match status" value="1"/>
</dbReference>
<dbReference type="PROSITE" id="PS00632">
    <property type="entry name" value="RIBOSOMAL_S4"/>
    <property type="match status" value="1"/>
</dbReference>
<dbReference type="PROSITE" id="PS50889">
    <property type="entry name" value="S4"/>
    <property type="match status" value="1"/>
</dbReference>
<accession>B1V8Z1</accession>
<sequence length="198" mass="23251">MSRYTGSTWKISRRLNYSITETGKELRKRAYAPGQHGQRRAKISDYGLQLKEKQKLRFTYGMSEKQFRKTFERASKLKGIHGEMFLVLLESRLDNIVYRLGFAKTRAQARQLVNHGHVLVEGKKVDIASYSLKPGQTITLREKSKNLKIVEEVLKNKFVRADYVSLDKQLNGKYVRYPKRNEFLAEINEQLIVEFYNR</sequence>
<organism>
    <name type="scientific">Phytoplasma australiense</name>
    <dbReference type="NCBI Taxonomy" id="59748"/>
    <lineage>
        <taxon>Bacteria</taxon>
        <taxon>Bacillati</taxon>
        <taxon>Mycoplasmatota</taxon>
        <taxon>Mollicutes</taxon>
        <taxon>Acholeplasmatales</taxon>
        <taxon>Acholeplasmataceae</taxon>
        <taxon>Candidatus Phytoplasma</taxon>
        <taxon>16SrXII (Stolbur group)</taxon>
    </lineage>
</organism>
<protein>
    <recommendedName>
        <fullName evidence="1">Small ribosomal subunit protein uS4</fullName>
    </recommendedName>
    <alternativeName>
        <fullName evidence="2">30S ribosomal protein S4</fullName>
    </alternativeName>
</protein>
<reference key="1">
    <citation type="journal article" date="2008" name="J. Bacteriol.">
        <title>Comparative genome analysis of 'Candidatus Phytoplasma australiense' (subgroup tuf-Australia I; rp-A) and 'Ca. Phytoplasma asteris' strains OY-M and AY-WB.</title>
        <authorList>
            <person name="Tran-Nguyen L.T."/>
            <person name="Kube M."/>
            <person name="Schneider B."/>
            <person name="Reinhardt R."/>
            <person name="Gibb K.S."/>
        </authorList>
    </citation>
    <scope>NUCLEOTIDE SEQUENCE [LARGE SCALE GENOMIC DNA]</scope>
</reference>
<name>RS4_PHYAS</name>
<evidence type="ECO:0000255" key="1">
    <source>
        <dbReference type="HAMAP-Rule" id="MF_01306"/>
    </source>
</evidence>
<evidence type="ECO:0000305" key="2"/>
<keyword id="KW-1185">Reference proteome</keyword>
<keyword id="KW-0687">Ribonucleoprotein</keyword>
<keyword id="KW-0689">Ribosomal protein</keyword>
<keyword id="KW-0694">RNA-binding</keyword>
<keyword id="KW-0699">rRNA-binding</keyword>
<comment type="function">
    <text evidence="1">One of the primary rRNA binding proteins, it binds directly to 16S rRNA where it nucleates assembly of the body of the 30S subunit.</text>
</comment>
<comment type="function">
    <text evidence="1">With S5 and S12 plays an important role in translational accuracy.</text>
</comment>
<comment type="subunit">
    <text evidence="1">Part of the 30S ribosomal subunit. Contacts protein S5. The interaction surface between S4 and S5 is involved in control of translational fidelity.</text>
</comment>
<comment type="similarity">
    <text evidence="1">Belongs to the universal ribosomal protein uS4 family.</text>
</comment>
<proteinExistence type="inferred from homology"/>
<feature type="chain" id="PRO_1000140771" description="Small ribosomal subunit protein uS4">
    <location>
        <begin position="1"/>
        <end position="198"/>
    </location>
</feature>
<feature type="domain" description="S4 RNA-binding" evidence="1">
    <location>
        <begin position="91"/>
        <end position="151"/>
    </location>
</feature>